<evidence type="ECO:0000250" key="1"/>
<evidence type="ECO:0000250" key="2">
    <source>
        <dbReference type="UniProtKB" id="P14743"/>
    </source>
</evidence>
<evidence type="ECO:0000305" key="3"/>
<proteinExistence type="inferred from homology"/>
<name>NMT_CANGA</name>
<comment type="function">
    <text>Adds a myristoyl group to the N-terminal glycine residue of certain cellular proteins.</text>
</comment>
<comment type="catalytic activity">
    <reaction>
        <text>N-terminal glycyl-[protein] + tetradecanoyl-CoA = N-tetradecanoylglycyl-[protein] + CoA + H(+)</text>
        <dbReference type="Rhea" id="RHEA:15521"/>
        <dbReference type="Rhea" id="RHEA-COMP:12666"/>
        <dbReference type="Rhea" id="RHEA-COMP:12667"/>
        <dbReference type="ChEBI" id="CHEBI:15378"/>
        <dbReference type="ChEBI" id="CHEBI:57287"/>
        <dbReference type="ChEBI" id="CHEBI:57385"/>
        <dbReference type="ChEBI" id="CHEBI:64723"/>
        <dbReference type="ChEBI" id="CHEBI:133050"/>
        <dbReference type="EC" id="2.3.1.97"/>
    </reaction>
</comment>
<comment type="subunit">
    <text evidence="1">Monomer.</text>
</comment>
<comment type="subcellular location">
    <subcellularLocation>
        <location>Cytoplasm</location>
    </subcellularLocation>
</comment>
<comment type="similarity">
    <text evidence="3">Belongs to the NMT family.</text>
</comment>
<comment type="sequence caution" evidence="3">
    <conflict type="frameshift">
        <sequence resource="EMBL-CDS" id="AAC26048"/>
    </conflict>
</comment>
<dbReference type="EC" id="2.3.1.97"/>
<dbReference type="EMBL" id="AF073886">
    <property type="protein sequence ID" value="AAC26048.1"/>
    <property type="status" value="ALT_FRAME"/>
    <property type="molecule type" value="Genomic_DNA"/>
</dbReference>
<dbReference type="EMBL" id="CR380947">
    <property type="protein sequence ID" value="CAG57836.1"/>
    <property type="molecule type" value="Genomic_DNA"/>
</dbReference>
<dbReference type="RefSeq" id="XP_444943.1">
    <property type="nucleotide sequence ID" value="XM_444943.1"/>
</dbReference>
<dbReference type="SMR" id="O74234"/>
<dbReference type="FunCoup" id="O74234">
    <property type="interactions" value="993"/>
</dbReference>
<dbReference type="STRING" id="284593.O74234"/>
<dbReference type="EnsemblFungi" id="CAGL0A04059g-T">
    <property type="protein sequence ID" value="CAGL0A04059g-T-p1"/>
    <property type="gene ID" value="CAGL0A04059g"/>
</dbReference>
<dbReference type="GeneID" id="2886412"/>
<dbReference type="KEGG" id="cgr:2886412"/>
<dbReference type="CGD" id="CAL0126631">
    <property type="gene designation" value="NMT1"/>
</dbReference>
<dbReference type="VEuPathDB" id="FungiDB:B1J91_A04059g"/>
<dbReference type="VEuPathDB" id="FungiDB:CAGL0A04059g"/>
<dbReference type="eggNOG" id="KOG2779">
    <property type="taxonomic scope" value="Eukaryota"/>
</dbReference>
<dbReference type="HOGENOM" id="CLU_022882_2_0_1"/>
<dbReference type="InParanoid" id="O74234"/>
<dbReference type="OMA" id="GWKRDWH"/>
<dbReference type="Proteomes" id="UP000002428">
    <property type="component" value="Chromosome A"/>
</dbReference>
<dbReference type="GO" id="GO:0005829">
    <property type="term" value="C:cytosol"/>
    <property type="evidence" value="ECO:0007669"/>
    <property type="project" value="EnsemblFungi"/>
</dbReference>
<dbReference type="GO" id="GO:0004379">
    <property type="term" value="F:glycylpeptide N-tetradecanoyltransferase activity"/>
    <property type="evidence" value="ECO:0007669"/>
    <property type="project" value="UniProtKB-EC"/>
</dbReference>
<dbReference type="FunFam" id="3.40.630.30:FF:000042">
    <property type="entry name" value="Glycylpeptide N-tetradecanoyltransferase"/>
    <property type="match status" value="1"/>
</dbReference>
<dbReference type="FunFam" id="3.40.630.30:FF:000056">
    <property type="entry name" value="Glycylpeptide N-tetradecanoyltransferase"/>
    <property type="match status" value="1"/>
</dbReference>
<dbReference type="Gene3D" id="3.40.630.30">
    <property type="match status" value="2"/>
</dbReference>
<dbReference type="InterPro" id="IPR016181">
    <property type="entry name" value="Acyl_CoA_acyltransferase"/>
</dbReference>
<dbReference type="InterPro" id="IPR000903">
    <property type="entry name" value="NMT"/>
</dbReference>
<dbReference type="InterPro" id="IPR022677">
    <property type="entry name" value="NMT_C"/>
</dbReference>
<dbReference type="InterPro" id="IPR022678">
    <property type="entry name" value="NMT_CS"/>
</dbReference>
<dbReference type="InterPro" id="IPR022676">
    <property type="entry name" value="NMT_N"/>
</dbReference>
<dbReference type="PANTHER" id="PTHR11377:SF5">
    <property type="entry name" value="GLYCYLPEPTIDE N-TETRADECANOYLTRANSFERASE"/>
    <property type="match status" value="1"/>
</dbReference>
<dbReference type="PANTHER" id="PTHR11377">
    <property type="entry name" value="N-MYRISTOYL TRANSFERASE"/>
    <property type="match status" value="1"/>
</dbReference>
<dbReference type="Pfam" id="PF01233">
    <property type="entry name" value="NMT"/>
    <property type="match status" value="1"/>
</dbReference>
<dbReference type="Pfam" id="PF02799">
    <property type="entry name" value="NMT_C"/>
    <property type="match status" value="1"/>
</dbReference>
<dbReference type="PIRSF" id="PIRSF015892">
    <property type="entry name" value="N-myristl_transf"/>
    <property type="match status" value="1"/>
</dbReference>
<dbReference type="SUPFAM" id="SSF55729">
    <property type="entry name" value="Acyl-CoA N-acyltransferases (Nat)"/>
    <property type="match status" value="2"/>
</dbReference>
<dbReference type="PROSITE" id="PS00975">
    <property type="entry name" value="NMT_1"/>
    <property type="match status" value="1"/>
</dbReference>
<dbReference type="PROSITE" id="PS00976">
    <property type="entry name" value="NMT_2"/>
    <property type="match status" value="1"/>
</dbReference>
<reference key="1">
    <citation type="submission" date="1998-06" db="EMBL/GenBank/DDBJ databases">
        <title>Isolation of the gene encoding the myristoyl-CoA:protein N-myristoyltransferase from the pathogenic yeast, Candida glabrata.</title>
        <authorList>
            <person name="Hosking S.L."/>
            <person name="Massey S.E."/>
            <person name="Egerton M."/>
        </authorList>
    </citation>
    <scope>NUCLEOTIDE SEQUENCE [GENOMIC DNA]</scope>
</reference>
<reference key="2">
    <citation type="journal article" date="2004" name="Nature">
        <title>Genome evolution in yeasts.</title>
        <authorList>
            <person name="Dujon B."/>
            <person name="Sherman D."/>
            <person name="Fischer G."/>
            <person name="Durrens P."/>
            <person name="Casaregola S."/>
            <person name="Lafontaine I."/>
            <person name="de Montigny J."/>
            <person name="Marck C."/>
            <person name="Neuveglise C."/>
            <person name="Talla E."/>
            <person name="Goffard N."/>
            <person name="Frangeul L."/>
            <person name="Aigle M."/>
            <person name="Anthouard V."/>
            <person name="Babour A."/>
            <person name="Barbe V."/>
            <person name="Barnay S."/>
            <person name="Blanchin S."/>
            <person name="Beckerich J.-M."/>
            <person name="Beyne E."/>
            <person name="Bleykasten C."/>
            <person name="Boisrame A."/>
            <person name="Boyer J."/>
            <person name="Cattolico L."/>
            <person name="Confanioleri F."/>
            <person name="de Daruvar A."/>
            <person name="Despons L."/>
            <person name="Fabre E."/>
            <person name="Fairhead C."/>
            <person name="Ferry-Dumazet H."/>
            <person name="Groppi A."/>
            <person name="Hantraye F."/>
            <person name="Hennequin C."/>
            <person name="Jauniaux N."/>
            <person name="Joyet P."/>
            <person name="Kachouri R."/>
            <person name="Kerrest A."/>
            <person name="Koszul R."/>
            <person name="Lemaire M."/>
            <person name="Lesur I."/>
            <person name="Ma L."/>
            <person name="Muller H."/>
            <person name="Nicaud J.-M."/>
            <person name="Nikolski M."/>
            <person name="Oztas S."/>
            <person name="Ozier-Kalogeropoulos O."/>
            <person name="Pellenz S."/>
            <person name="Potier S."/>
            <person name="Richard G.-F."/>
            <person name="Straub M.-L."/>
            <person name="Suleau A."/>
            <person name="Swennen D."/>
            <person name="Tekaia F."/>
            <person name="Wesolowski-Louvel M."/>
            <person name="Westhof E."/>
            <person name="Wirth B."/>
            <person name="Zeniou-Meyer M."/>
            <person name="Zivanovic Y."/>
            <person name="Bolotin-Fukuhara M."/>
            <person name="Thierry A."/>
            <person name="Bouchier C."/>
            <person name="Caudron B."/>
            <person name="Scarpelli C."/>
            <person name="Gaillardin C."/>
            <person name="Weissenbach J."/>
            <person name="Wincker P."/>
            <person name="Souciet J.-L."/>
        </authorList>
    </citation>
    <scope>NUCLEOTIDE SEQUENCE [LARGE SCALE GENOMIC DNA]</scope>
    <source>
        <strain>ATCC 2001 / BCRC 20586 / JCM 3761 / NBRC 0622 / NRRL Y-65 / CBS 138</strain>
    </source>
</reference>
<gene>
    <name type="primary">NMT1</name>
    <name type="ordered locus">CAGL0A04059g</name>
</gene>
<organism>
    <name type="scientific">Candida glabrata (strain ATCC 2001 / BCRC 20586 / JCM 3761 / NBRC 0622 / NRRL Y-65 / CBS 138)</name>
    <name type="common">Yeast</name>
    <name type="synonym">Nakaseomyces glabratus</name>
    <dbReference type="NCBI Taxonomy" id="284593"/>
    <lineage>
        <taxon>Eukaryota</taxon>
        <taxon>Fungi</taxon>
        <taxon>Dikarya</taxon>
        <taxon>Ascomycota</taxon>
        <taxon>Saccharomycotina</taxon>
        <taxon>Saccharomycetes</taxon>
        <taxon>Saccharomycetales</taxon>
        <taxon>Saccharomycetaceae</taxon>
        <taxon>Nakaseomyces</taxon>
    </lineage>
</organism>
<accession>O74234</accession>
<accession>Q6FY92</accession>
<protein>
    <recommendedName>
        <fullName>Glycylpeptide N-tetradecanoyltransferase</fullName>
        <ecNumber>2.3.1.97</ecNumber>
    </recommendedName>
    <alternativeName>
        <fullName>Myristoyl-CoA:protein N-myristoyltransferase</fullName>
        <shortName>NMT</shortName>
    </alternativeName>
    <alternativeName>
        <fullName>Peptide N-myristoyltransferase</fullName>
    </alternativeName>
</protein>
<sequence length="451" mass="52659">MSEKKIEELLKLLSMNNGDMSKLTANQRKEMKEYKFWKTQPVTKFDEEVKEEGPIHEEKTPADIPDEPLPLLPDFEWCAIDVDDEKQLEDVFVLLNENYVEDRDASFRFNYTREFFNWALKSPGWTPDWHIGVRVKASKKLIAFISAIPVRLRVRAKVIDSVEINFLCVHKQLRSKRLTPVLIKEITRRVNKRNIWHALYTAGVVLPAPVSTCRYAHRPLNWDKLYEVQFTDLPPNATKAEMVAKYTLPKATKTAGLRELRLEDVDQALALFNRYQSRFDIVQEFTKEEFIHWFINDKNVVEQDKRVVFSYVVESEGKVTDFFSFYSLPFTILNNSRYKDLGIGYLYYYASDADFKFEDRFDKEGTSLLKQRLSTLVQDACIIAAQNKMDVFNALSSQDNTLFLEDLKFGPGDGFLNFYLFNYRTFPITGGLTEDQHFDTEHRSNVGVVML</sequence>
<feature type="chain" id="PRO_0000064237" description="Glycylpeptide N-tetradecanoyltransferase">
    <location>
        <begin position="1"/>
        <end position="451"/>
    </location>
</feature>
<feature type="active site" description="Proton acceptor; via carboxylate" evidence="1">
    <location>
        <position position="451"/>
    </location>
</feature>
<feature type="binding site" evidence="2">
    <location>
        <begin position="34"/>
        <end position="37"/>
    </location>
    <ligand>
        <name>tetradecanoyl-CoA</name>
        <dbReference type="ChEBI" id="CHEBI:57385"/>
    </ligand>
</feature>
<feature type="binding site" evidence="2">
    <location>
        <begin position="167"/>
        <end position="169"/>
    </location>
    <ligand>
        <name>tetradecanoyl-CoA</name>
        <dbReference type="ChEBI" id="CHEBI:57385"/>
    </ligand>
</feature>
<feature type="binding site" evidence="2">
    <location>
        <begin position="175"/>
        <end position="179"/>
    </location>
    <ligand>
        <name>tetradecanoyl-CoA</name>
        <dbReference type="ChEBI" id="CHEBI:57385"/>
    </ligand>
</feature>
<feature type="sequence conflict" description="In Ref. 1; AAC26048." evidence="3" ref="1">
    <original>Y</original>
    <variation>F</variation>
    <location>
        <position position="338"/>
    </location>
</feature>
<keyword id="KW-0012">Acyltransferase</keyword>
<keyword id="KW-0963">Cytoplasm</keyword>
<keyword id="KW-1185">Reference proteome</keyword>
<keyword id="KW-0808">Transferase</keyword>